<gene>
    <name evidence="1" type="primary">ndvA</name>
    <name type="ordered locus">RPE_1709</name>
</gene>
<sequence length="602" mass="65944">MPMLRLYARVLQLLGKEAMLGWVLAGANLLLAAAQFAEPVLFGRIVDVLSGNLSTGAMAQPAQSPWPLLLAWAVFGLFTIGCGAAVALHADRLAHRQRQAILTDYFEHVLQLPLTYHTGTHSGRLMKVMLNGTDALWRLWLGFFREHFAALMSLVVLLPLSIYINWRLALLLFALCVVFTVLTTLVVRKTYAMQGEVEESYSDLSARASDALGNIALVQSFVRIDAEVQGLRFVADRLLAMQMPVLSWWALVTVITRASTTITVLAIFTVGIALHEQGLTSVGEIVMFVSFATMLIQKLEQVVGFVNSVFMEAPRLQEFVNVLDAVPAVRDRLDAIDPGRLSGLVEFDNVSFSYDGKRPAIEDLSFTALPGQTIALVGATGAGKSTAIALLHRAFDPQSGVIKIDGMDVRGLTLAGLRRNIGVVFQEALLFDRTIADNLRVGKPDATEEEMRIAASRAQALDFIERSELKFDTNAGERGRMLSGGERQRLSIARALLKDPPILILDEATSALDAVTEAKVNLALDEVMKGRTTFVIAHRLSTIRHATRILVFDNGRVIESGSFDELLARRGYFAELAHAQFMVQDSARSAMPAAQPEGIPEF</sequence>
<feature type="chain" id="PRO_0000290253" description="Beta-(1--&gt;2)glucan export ATP-binding/permease protein NdvA">
    <location>
        <begin position="1"/>
        <end position="602"/>
    </location>
</feature>
<feature type="transmembrane region" description="Helical" evidence="1">
    <location>
        <begin position="22"/>
        <end position="42"/>
    </location>
</feature>
<feature type="transmembrane region" description="Helical" evidence="1">
    <location>
        <begin position="68"/>
        <end position="88"/>
    </location>
</feature>
<feature type="transmembrane region" description="Helical" evidence="1">
    <location>
        <begin position="146"/>
        <end position="166"/>
    </location>
</feature>
<feature type="transmembrane region" description="Helical" evidence="1">
    <location>
        <begin position="167"/>
        <end position="187"/>
    </location>
</feature>
<feature type="transmembrane region" description="Helical" evidence="1">
    <location>
        <begin position="238"/>
        <end position="258"/>
    </location>
</feature>
<feature type="transmembrane region" description="Helical" evidence="1">
    <location>
        <begin position="285"/>
        <end position="305"/>
    </location>
</feature>
<feature type="domain" description="ABC transmembrane type-1" evidence="1">
    <location>
        <begin position="21"/>
        <end position="311"/>
    </location>
</feature>
<feature type="domain" description="ABC transporter" evidence="1">
    <location>
        <begin position="345"/>
        <end position="579"/>
    </location>
</feature>
<feature type="binding site" evidence="1">
    <location>
        <begin position="378"/>
        <end position="385"/>
    </location>
    <ligand>
        <name>ATP</name>
        <dbReference type="ChEBI" id="CHEBI:30616"/>
    </ligand>
</feature>
<proteinExistence type="inferred from homology"/>
<keyword id="KW-0067">ATP-binding</keyword>
<keyword id="KW-0997">Cell inner membrane</keyword>
<keyword id="KW-1003">Cell membrane</keyword>
<keyword id="KW-0472">Membrane</keyword>
<keyword id="KW-0547">Nucleotide-binding</keyword>
<keyword id="KW-0762">Sugar transport</keyword>
<keyword id="KW-1278">Translocase</keyword>
<keyword id="KW-0812">Transmembrane</keyword>
<keyword id="KW-1133">Transmembrane helix</keyword>
<keyword id="KW-0813">Transport</keyword>
<name>NDVA_RHOP5</name>
<protein>
    <recommendedName>
        <fullName evidence="1">Beta-(1--&gt;2)glucan export ATP-binding/permease protein NdvA</fullName>
        <ecNumber evidence="1">7.5.2.3</ecNumber>
    </recommendedName>
</protein>
<organism>
    <name type="scientific">Rhodopseudomonas palustris (strain BisA53)</name>
    <dbReference type="NCBI Taxonomy" id="316055"/>
    <lineage>
        <taxon>Bacteria</taxon>
        <taxon>Pseudomonadati</taxon>
        <taxon>Pseudomonadota</taxon>
        <taxon>Alphaproteobacteria</taxon>
        <taxon>Hyphomicrobiales</taxon>
        <taxon>Nitrobacteraceae</taxon>
        <taxon>Rhodopseudomonas</taxon>
    </lineage>
</organism>
<accession>Q07QX6</accession>
<comment type="function">
    <text evidence="1">Involved in Beta-(1--&gt;2)glucan export. Transmembrane domains (TMD) form a pore in the inner membrane and the ATP-binding domain (NBD) is responsible for energy generation.</text>
</comment>
<comment type="catalytic activity">
    <reaction evidence="1">
        <text>[(1-&gt;2)-beta-D-glucosyl](n)(in) + ATP + H2O = [(1-&gt;2)-beta-D-glucosyl](n)(out) + ADP + phosphate + H(+)</text>
        <dbReference type="Rhea" id="RHEA:18453"/>
        <dbReference type="Rhea" id="RHEA-COMP:11881"/>
        <dbReference type="ChEBI" id="CHEBI:15377"/>
        <dbReference type="ChEBI" id="CHEBI:15378"/>
        <dbReference type="ChEBI" id="CHEBI:27517"/>
        <dbReference type="ChEBI" id="CHEBI:30616"/>
        <dbReference type="ChEBI" id="CHEBI:43474"/>
        <dbReference type="ChEBI" id="CHEBI:456216"/>
        <dbReference type="EC" id="7.5.2.3"/>
    </reaction>
</comment>
<comment type="subunit">
    <text evidence="1">Homodimer.</text>
</comment>
<comment type="subcellular location">
    <subcellularLocation>
        <location evidence="1">Cell inner membrane</location>
        <topology evidence="1">Multi-pass membrane protein</topology>
    </subcellularLocation>
</comment>
<comment type="domain">
    <text>In NdvA the ATP-binding domain (NBD) and the transmembrane domain (TMD) are fused.</text>
</comment>
<comment type="similarity">
    <text evidence="1">Belongs to the ABC transporter superfamily. Beta-(1--&gt;2)glucan exporter (TC 3.A.1.108.1) family.</text>
</comment>
<dbReference type="EC" id="7.5.2.3" evidence="1"/>
<dbReference type="EMBL" id="CP000463">
    <property type="protein sequence ID" value="ABJ05658.1"/>
    <property type="molecule type" value="Genomic_DNA"/>
</dbReference>
<dbReference type="SMR" id="Q07QX6"/>
<dbReference type="STRING" id="316055.RPE_1709"/>
<dbReference type="KEGG" id="rpe:RPE_1709"/>
<dbReference type="eggNOG" id="COG1132">
    <property type="taxonomic scope" value="Bacteria"/>
</dbReference>
<dbReference type="HOGENOM" id="CLU_000604_84_1_5"/>
<dbReference type="OrthoDB" id="9804259at2"/>
<dbReference type="GO" id="GO:0005886">
    <property type="term" value="C:plasma membrane"/>
    <property type="evidence" value="ECO:0007669"/>
    <property type="project" value="UniProtKB-SubCell"/>
</dbReference>
<dbReference type="GO" id="GO:0015441">
    <property type="term" value="F:ABC-type beta-glucan transporter activity"/>
    <property type="evidence" value="ECO:0007669"/>
    <property type="project" value="UniProtKB-EC"/>
</dbReference>
<dbReference type="GO" id="GO:0015421">
    <property type="term" value="F:ABC-type oligopeptide transporter activity"/>
    <property type="evidence" value="ECO:0007669"/>
    <property type="project" value="TreeGrafter"/>
</dbReference>
<dbReference type="GO" id="GO:0005524">
    <property type="term" value="F:ATP binding"/>
    <property type="evidence" value="ECO:0007669"/>
    <property type="project" value="UniProtKB-KW"/>
</dbReference>
<dbReference type="GO" id="GO:0016887">
    <property type="term" value="F:ATP hydrolysis activity"/>
    <property type="evidence" value="ECO:0007669"/>
    <property type="project" value="InterPro"/>
</dbReference>
<dbReference type="CDD" id="cd18562">
    <property type="entry name" value="ABC_6TM_NdvA_beta-glucan_exporter_like"/>
    <property type="match status" value="1"/>
</dbReference>
<dbReference type="FunFam" id="3.40.50.300:FF:000221">
    <property type="entry name" value="Multidrug ABC transporter ATP-binding protein"/>
    <property type="match status" value="1"/>
</dbReference>
<dbReference type="Gene3D" id="1.20.1560.10">
    <property type="entry name" value="ABC transporter type 1, transmembrane domain"/>
    <property type="match status" value="1"/>
</dbReference>
<dbReference type="Gene3D" id="3.40.50.300">
    <property type="entry name" value="P-loop containing nucleotide triphosphate hydrolases"/>
    <property type="match status" value="1"/>
</dbReference>
<dbReference type="InterPro" id="IPR003593">
    <property type="entry name" value="AAA+_ATPase"/>
</dbReference>
<dbReference type="InterPro" id="IPR011527">
    <property type="entry name" value="ABC1_TM_dom"/>
</dbReference>
<dbReference type="InterPro" id="IPR036640">
    <property type="entry name" value="ABC1_TM_sf"/>
</dbReference>
<dbReference type="InterPro" id="IPR003439">
    <property type="entry name" value="ABC_transporter-like_ATP-bd"/>
</dbReference>
<dbReference type="InterPro" id="IPR017871">
    <property type="entry name" value="ABC_transporter-like_CS"/>
</dbReference>
<dbReference type="InterPro" id="IPR027417">
    <property type="entry name" value="P-loop_NTPase"/>
</dbReference>
<dbReference type="InterPro" id="IPR039421">
    <property type="entry name" value="Type_1_exporter"/>
</dbReference>
<dbReference type="NCBIfam" id="NF010178">
    <property type="entry name" value="PRK13657.1"/>
    <property type="match status" value="1"/>
</dbReference>
<dbReference type="PANTHER" id="PTHR43394:SF1">
    <property type="entry name" value="ATP-BINDING CASSETTE SUB-FAMILY B MEMBER 10, MITOCHONDRIAL"/>
    <property type="match status" value="1"/>
</dbReference>
<dbReference type="PANTHER" id="PTHR43394">
    <property type="entry name" value="ATP-DEPENDENT PERMEASE MDL1, MITOCHONDRIAL"/>
    <property type="match status" value="1"/>
</dbReference>
<dbReference type="Pfam" id="PF00664">
    <property type="entry name" value="ABC_membrane"/>
    <property type="match status" value="1"/>
</dbReference>
<dbReference type="Pfam" id="PF00005">
    <property type="entry name" value="ABC_tran"/>
    <property type="match status" value="1"/>
</dbReference>
<dbReference type="SMART" id="SM00382">
    <property type="entry name" value="AAA"/>
    <property type="match status" value="1"/>
</dbReference>
<dbReference type="SUPFAM" id="SSF90123">
    <property type="entry name" value="ABC transporter transmembrane region"/>
    <property type="match status" value="1"/>
</dbReference>
<dbReference type="SUPFAM" id="SSF52540">
    <property type="entry name" value="P-loop containing nucleoside triphosphate hydrolases"/>
    <property type="match status" value="1"/>
</dbReference>
<dbReference type="PROSITE" id="PS50929">
    <property type="entry name" value="ABC_TM1F"/>
    <property type="match status" value="1"/>
</dbReference>
<dbReference type="PROSITE" id="PS00211">
    <property type="entry name" value="ABC_TRANSPORTER_1"/>
    <property type="match status" value="1"/>
</dbReference>
<dbReference type="PROSITE" id="PS50893">
    <property type="entry name" value="ABC_TRANSPORTER_2"/>
    <property type="match status" value="1"/>
</dbReference>
<dbReference type="PROSITE" id="PS51317">
    <property type="entry name" value="NDVA"/>
    <property type="match status" value="1"/>
</dbReference>
<evidence type="ECO:0000255" key="1">
    <source>
        <dbReference type="HAMAP-Rule" id="MF_01728"/>
    </source>
</evidence>
<reference key="1">
    <citation type="submission" date="2006-09" db="EMBL/GenBank/DDBJ databases">
        <title>Complete sequence of Rhodopseudomonas palustris BisA53.</title>
        <authorList>
            <consortium name="US DOE Joint Genome Institute"/>
            <person name="Copeland A."/>
            <person name="Lucas S."/>
            <person name="Lapidus A."/>
            <person name="Barry K."/>
            <person name="Detter J.C."/>
            <person name="Glavina del Rio T."/>
            <person name="Hammon N."/>
            <person name="Israni S."/>
            <person name="Dalin E."/>
            <person name="Tice H."/>
            <person name="Pitluck S."/>
            <person name="Chain P."/>
            <person name="Malfatti S."/>
            <person name="Shin M."/>
            <person name="Vergez L."/>
            <person name="Schmutz J."/>
            <person name="Larimer F."/>
            <person name="Land M."/>
            <person name="Hauser L."/>
            <person name="Pelletier D.A."/>
            <person name="Kyrpides N."/>
            <person name="Kim E."/>
            <person name="Harwood C.S."/>
            <person name="Oda Y."/>
            <person name="Richardson P."/>
        </authorList>
    </citation>
    <scope>NUCLEOTIDE SEQUENCE [LARGE SCALE GENOMIC DNA]</scope>
    <source>
        <strain>BisA53</strain>
    </source>
</reference>